<sequence>MSRLGALGGSRAGLGLLLGTAAGLGFLCVLYSQRWKRTQRHGRSQSLPNSLDYAQTSERGRQVTQLRAIPGEAGDAAMLSSLPQEGQEKVLDRLDFVLTSLMALRREVEELQRSLQGLAGEIVGEVRSHMEENQRVARRRRFPFARERSDSTGSSSVYFTASSGATLTDAESEGGYTTANAESDYERDSDKESEDAEDEVSCETVKMGRKDSLDLDMEVASSPASAALEDDDSSGLEDVQLLLQQADELHQGSEQNKQEGFQLLLNNKLAYGSRQDFLWRLARAYSDMTELTEEESEKKSYALNGKEEAEAALKKGDESAASHLWYAVLCGQLAEHEGISKRIQSGFSFKEHVDKAIELQPEDPRGHFLLGRWCYQVSHLSWLEKKTATALFESPLSATVQDALQSFLKAEELQPGFSKAGRVYISKCYRELGKNSEARKWLNLAQELPNITNEDSAFQKDLEELEVILGK</sequence>
<dbReference type="EMBL" id="BC082081">
    <property type="protein sequence ID" value="AAH82081.1"/>
    <property type="molecule type" value="mRNA"/>
</dbReference>
<dbReference type="RefSeq" id="NP_001014068.1">
    <property type="nucleotide sequence ID" value="NM_001014046.2"/>
</dbReference>
<dbReference type="SMR" id="Q66H15"/>
<dbReference type="FunCoup" id="Q66H15">
    <property type="interactions" value="1735"/>
</dbReference>
<dbReference type="STRING" id="10116.ENSRNOP00000016356"/>
<dbReference type="iPTMnet" id="Q66H15"/>
<dbReference type="PhosphoSitePlus" id="Q66H15"/>
<dbReference type="jPOST" id="Q66H15"/>
<dbReference type="PaxDb" id="10116-ENSRNOP00000016356"/>
<dbReference type="Ensembl" id="ENSRNOT00000016356.7">
    <property type="protein sequence ID" value="ENSRNOP00000016356.5"/>
    <property type="gene ID" value="ENSRNOG00000011690.7"/>
</dbReference>
<dbReference type="GeneID" id="311328"/>
<dbReference type="KEGG" id="rno:311328"/>
<dbReference type="UCSC" id="RGD:1308697">
    <property type="organism name" value="rat"/>
</dbReference>
<dbReference type="AGR" id="RGD:1308697"/>
<dbReference type="CTD" id="55177"/>
<dbReference type="RGD" id="1308697">
    <property type="gene designation" value="Rmdn3"/>
</dbReference>
<dbReference type="eggNOG" id="ENOG502QWUP">
    <property type="taxonomic scope" value="Eukaryota"/>
</dbReference>
<dbReference type="GeneTree" id="ENSGT00950000182992"/>
<dbReference type="HOGENOM" id="CLU_046369_0_2_1"/>
<dbReference type="InParanoid" id="Q66H15"/>
<dbReference type="OMA" id="QHESMHS"/>
<dbReference type="OrthoDB" id="512473at2759"/>
<dbReference type="PhylomeDB" id="Q66H15"/>
<dbReference type="TreeFam" id="TF315854"/>
<dbReference type="PRO" id="PR:Q66H15"/>
<dbReference type="Proteomes" id="UP000002494">
    <property type="component" value="Chromosome 3"/>
</dbReference>
<dbReference type="Bgee" id="ENSRNOG00000011690">
    <property type="expression patterns" value="Expressed in duodenum and 19 other cell types or tissues"/>
</dbReference>
<dbReference type="GO" id="GO:0005737">
    <property type="term" value="C:cytoplasm"/>
    <property type="evidence" value="ECO:0000318"/>
    <property type="project" value="GO_Central"/>
</dbReference>
<dbReference type="GO" id="GO:0098978">
    <property type="term" value="C:glutamatergic synapse"/>
    <property type="evidence" value="ECO:0000314"/>
    <property type="project" value="SynGO"/>
</dbReference>
<dbReference type="GO" id="GO:0045171">
    <property type="term" value="C:intercellular bridge"/>
    <property type="evidence" value="ECO:0007669"/>
    <property type="project" value="Ensembl"/>
</dbReference>
<dbReference type="GO" id="GO:0005741">
    <property type="term" value="C:mitochondrial outer membrane"/>
    <property type="evidence" value="ECO:0000250"/>
    <property type="project" value="UniProtKB"/>
</dbReference>
<dbReference type="GO" id="GO:0005739">
    <property type="term" value="C:mitochondrion"/>
    <property type="evidence" value="ECO:0000266"/>
    <property type="project" value="RGD"/>
</dbReference>
<dbReference type="GO" id="GO:0097431">
    <property type="term" value="C:mitotic spindle pole"/>
    <property type="evidence" value="ECO:0000266"/>
    <property type="project" value="RGD"/>
</dbReference>
<dbReference type="GO" id="GO:0005634">
    <property type="term" value="C:nucleus"/>
    <property type="evidence" value="ECO:0007669"/>
    <property type="project" value="UniProtKB-SubCell"/>
</dbReference>
<dbReference type="GO" id="GO:0044232">
    <property type="term" value="C:organelle membrane contact site"/>
    <property type="evidence" value="ECO:0000266"/>
    <property type="project" value="RGD"/>
</dbReference>
<dbReference type="GO" id="GO:0098794">
    <property type="term" value="C:postsynapse"/>
    <property type="evidence" value="ECO:0000314"/>
    <property type="project" value="SynGO"/>
</dbReference>
<dbReference type="GO" id="GO:0098793">
    <property type="term" value="C:presynapse"/>
    <property type="evidence" value="ECO:0000314"/>
    <property type="project" value="SynGO"/>
</dbReference>
<dbReference type="GO" id="GO:0005876">
    <property type="term" value="C:spindle microtubule"/>
    <property type="evidence" value="ECO:0000266"/>
    <property type="project" value="RGD"/>
</dbReference>
<dbReference type="GO" id="GO:0008017">
    <property type="term" value="F:microtubule binding"/>
    <property type="evidence" value="ECO:0000266"/>
    <property type="project" value="RGD"/>
</dbReference>
<dbReference type="GO" id="GO:0006915">
    <property type="term" value="P:apoptotic process"/>
    <property type="evidence" value="ECO:0007669"/>
    <property type="project" value="UniProtKB-KW"/>
</dbReference>
<dbReference type="GO" id="GO:0030154">
    <property type="term" value="P:cell differentiation"/>
    <property type="evidence" value="ECO:0007669"/>
    <property type="project" value="UniProtKB-KW"/>
</dbReference>
<dbReference type="GO" id="GO:0006874">
    <property type="term" value="P:intracellular calcium ion homeostasis"/>
    <property type="evidence" value="ECO:0000250"/>
    <property type="project" value="UniProtKB"/>
</dbReference>
<dbReference type="FunFam" id="1.25.40.10:FF:000310">
    <property type="entry name" value="Regulator of microtubule dynamics protein 3"/>
    <property type="match status" value="1"/>
</dbReference>
<dbReference type="Gene3D" id="1.25.40.10">
    <property type="entry name" value="Tetratricopeptide repeat domain"/>
    <property type="match status" value="1"/>
</dbReference>
<dbReference type="InterPro" id="IPR049039">
    <property type="entry name" value="RMD1-3_a_helical_rpt"/>
</dbReference>
<dbReference type="InterPro" id="IPR011990">
    <property type="entry name" value="TPR-like_helical_dom_sf"/>
</dbReference>
<dbReference type="PANTHER" id="PTHR16056">
    <property type="entry name" value="REGULATOR OF MICROTUBULE DYNAMICS PROTEIN"/>
    <property type="match status" value="1"/>
</dbReference>
<dbReference type="PANTHER" id="PTHR16056:SF18">
    <property type="entry name" value="REGULATOR OF MICROTUBULE DYNAMICS PROTEIN 3"/>
    <property type="match status" value="1"/>
</dbReference>
<dbReference type="Pfam" id="PF21033">
    <property type="entry name" value="RMD1-3"/>
    <property type="match status" value="1"/>
</dbReference>
<dbReference type="SUPFAM" id="SSF48452">
    <property type="entry name" value="TPR-like"/>
    <property type="match status" value="1"/>
</dbReference>
<keyword id="KW-0053">Apoptosis</keyword>
<keyword id="KW-0175">Coiled coil</keyword>
<keyword id="KW-0963">Cytoplasm</keyword>
<keyword id="KW-0206">Cytoskeleton</keyword>
<keyword id="KW-0221">Differentiation</keyword>
<keyword id="KW-0472">Membrane</keyword>
<keyword id="KW-0493">Microtubule</keyword>
<keyword id="KW-0496">Mitochondrion</keyword>
<keyword id="KW-1000">Mitochondrion outer membrane</keyword>
<keyword id="KW-0539">Nucleus</keyword>
<keyword id="KW-0597">Phosphoprotein</keyword>
<keyword id="KW-1185">Reference proteome</keyword>
<keyword id="KW-0812">Transmembrane</keyword>
<keyword id="KW-1133">Transmembrane helix</keyword>
<name>RMD3_RAT</name>
<feature type="chain" id="PRO_0000287513" description="Regulator of microtubule dynamics protein 3">
    <location>
        <begin position="1"/>
        <end position="471"/>
    </location>
</feature>
<feature type="topological domain" description="Mitochondrial intermembrane" evidence="6">
    <location>
        <begin position="1"/>
        <end position="12"/>
    </location>
</feature>
<feature type="transmembrane region" description="Helical" evidence="4">
    <location>
        <begin position="13"/>
        <end position="35"/>
    </location>
</feature>
<feature type="topological domain" description="Cytoplasmic" evidence="6">
    <location>
        <begin position="36"/>
        <end position="471"/>
    </location>
</feature>
<feature type="region of interest" description="Disordered" evidence="5">
    <location>
        <begin position="168"/>
        <end position="203"/>
    </location>
</feature>
<feature type="coiled-coil region" evidence="4">
    <location>
        <begin position="91"/>
        <end position="125"/>
    </location>
</feature>
<feature type="short sequence motif" description="FFAT" evidence="3">
    <location>
        <begin position="157"/>
        <end position="163"/>
    </location>
</feature>
<feature type="compositionally biased region" description="Acidic residues" evidence="5">
    <location>
        <begin position="191"/>
        <end position="201"/>
    </location>
</feature>
<feature type="modified residue" description="Phosphoserine" evidence="3">
    <location>
        <position position="44"/>
    </location>
</feature>
<feature type="modified residue" description="Phosphoserine" evidence="8">
    <location>
        <position position="46"/>
    </location>
</feature>
<feature type="modified residue" description="Phosphoserine" evidence="8">
    <location>
        <position position="50"/>
    </location>
</feature>
<feature type="modified residue" description="Phosphoserine" evidence="2">
    <location>
        <position position="57"/>
    </location>
</feature>
<feature type="modified residue" description="Phosphothreonine" evidence="3">
    <location>
        <position position="160"/>
    </location>
</feature>
<feature type="modified residue" description="Phosphoserine" evidence="3">
    <location>
        <position position="183"/>
    </location>
</feature>
<feature type="modified residue" description="Phosphoserine" evidence="3">
    <location>
        <position position="193"/>
    </location>
</feature>
<feature type="modified residue" description="Phosphoserine" evidence="3">
    <location>
        <position position="212"/>
    </location>
</feature>
<feature type="modified residue" description="Phosphoserine" evidence="3">
    <location>
        <position position="233"/>
    </location>
</feature>
<proteinExistence type="evidence at protein level"/>
<accession>Q66H15</accession>
<organism>
    <name type="scientific">Rattus norvegicus</name>
    <name type="common">Rat</name>
    <dbReference type="NCBI Taxonomy" id="10116"/>
    <lineage>
        <taxon>Eukaryota</taxon>
        <taxon>Metazoa</taxon>
        <taxon>Chordata</taxon>
        <taxon>Craniata</taxon>
        <taxon>Vertebrata</taxon>
        <taxon>Euteleostomi</taxon>
        <taxon>Mammalia</taxon>
        <taxon>Eutheria</taxon>
        <taxon>Euarchontoglires</taxon>
        <taxon>Glires</taxon>
        <taxon>Rodentia</taxon>
        <taxon>Myomorpha</taxon>
        <taxon>Muroidea</taxon>
        <taxon>Muridae</taxon>
        <taxon>Murinae</taxon>
        <taxon>Rattus</taxon>
    </lineage>
</organism>
<reference key="1">
    <citation type="journal article" date="2004" name="Genome Res.">
        <title>The status, quality, and expansion of the NIH full-length cDNA project: the Mammalian Gene Collection (MGC).</title>
        <authorList>
            <consortium name="The MGC Project Team"/>
        </authorList>
    </citation>
    <scope>NUCLEOTIDE SEQUENCE [LARGE SCALE MRNA]</scope>
    <source>
        <tissue>Testis</tissue>
    </source>
</reference>
<reference key="2">
    <citation type="journal article" date="2012" name="Nat. Commun.">
        <title>Quantitative maps of protein phosphorylation sites across 14 different rat organs and tissues.</title>
        <authorList>
            <person name="Lundby A."/>
            <person name="Secher A."/>
            <person name="Lage K."/>
            <person name="Nordsborg N.B."/>
            <person name="Dmytriyev A."/>
            <person name="Lundby C."/>
            <person name="Olsen J.V."/>
        </authorList>
    </citation>
    <scope>PHOSPHORYLATION [LARGE SCALE ANALYSIS] AT SER-46 AND SER-50</scope>
    <scope>IDENTIFICATION BY MASS SPECTROMETRY [LARGE SCALE ANALYSIS]</scope>
</reference>
<comment type="function">
    <text evidence="1">Involved in cellular calcium homeostasis regulation (By similarity). May participate in differentiation and apoptosis of keratinocytes. Overexpression induces apoptosis (By similarity).</text>
</comment>
<comment type="subunit">
    <text evidence="3">Interacts with PTPN2. Interacts with microtubules. Interacts with VAPB. Interacts (via FFAT motif) with MOSPD2 (via MSP domain). Interacts (via phosphorylated FFAT motif) with MOSPD2, VAPA and VAPB.</text>
</comment>
<comment type="subcellular location">
    <subcellularLocation>
        <location evidence="3">Mitochondrion outer membrane</location>
        <topology evidence="3">Single-pass membrane protein</topology>
    </subcellularLocation>
    <subcellularLocation>
        <location evidence="3">Cytoplasm</location>
    </subcellularLocation>
    <subcellularLocation>
        <location evidence="3">Nucleus</location>
    </subcellularLocation>
    <subcellularLocation>
        <location evidence="3">Cytoplasm</location>
        <location evidence="3">Cytoskeleton</location>
        <location evidence="3">Spindle</location>
    </subcellularLocation>
    <subcellularLocation>
        <location evidence="3">Cytoplasm</location>
        <location evidence="3">Cytoskeleton</location>
        <location evidence="3">Spindle pole</location>
    </subcellularLocation>
    <text evidence="3">In interphase localizes in the cytoplasm, and during mitosis localizes to the spindle microtubules and spindle poles.</text>
</comment>
<comment type="domain">
    <text evidence="1">The transmembrane region is required for mitochondrial localization.</text>
</comment>
<comment type="domain">
    <text evidence="3">The FFAT motif is required for interaction with MOSPD2. The FFAT motif is involved in the interaction with VAPA and VAPB and its phosphorylation regulates these interactions.</text>
</comment>
<comment type="PTM">
    <text evidence="3">Phosphorylation at Thr-160 of the FFAT motif activates interaction with MOSPD2, VAPA and VAPB.</text>
</comment>
<comment type="similarity">
    <text evidence="6">Belongs to the RMDN family.</text>
</comment>
<protein>
    <recommendedName>
        <fullName evidence="6">Regulator of microtubule dynamics protein 3</fullName>
        <shortName>RMD-3</shortName>
    </recommendedName>
    <alternativeName>
        <fullName>Protein FAM82A2</fullName>
    </alternativeName>
    <alternativeName>
        <fullName>Protein FAM82C</fullName>
    </alternativeName>
</protein>
<gene>
    <name evidence="7" type="primary">Rmdn3</name>
    <name type="synonym">Fam82a2</name>
    <name type="synonym">Fam82c</name>
</gene>
<evidence type="ECO:0000250" key="1"/>
<evidence type="ECO:0000250" key="2">
    <source>
        <dbReference type="UniProtKB" id="Q3UJU9"/>
    </source>
</evidence>
<evidence type="ECO:0000250" key="3">
    <source>
        <dbReference type="UniProtKB" id="Q96TC7"/>
    </source>
</evidence>
<evidence type="ECO:0000255" key="4"/>
<evidence type="ECO:0000256" key="5">
    <source>
        <dbReference type="SAM" id="MobiDB-lite"/>
    </source>
</evidence>
<evidence type="ECO:0000305" key="6"/>
<evidence type="ECO:0000312" key="7">
    <source>
        <dbReference type="RGD" id="1308697"/>
    </source>
</evidence>
<evidence type="ECO:0007744" key="8">
    <source>
    </source>
</evidence>